<proteinExistence type="inferred from homology"/>
<keyword id="KW-0053">Apoptosis</keyword>
<keyword id="KW-0378">Hydrolase</keyword>
<keyword id="KW-0539">Nucleus</keyword>
<keyword id="KW-0645">Protease</keyword>
<keyword id="KW-1185">Reference proteome</keyword>
<keyword id="KW-0677">Repeat</keyword>
<keyword id="KW-0720">Serine protease</keyword>
<name>NM111_PICST</name>
<comment type="function">
    <text evidence="1">Nuclear serine protease which mediates apoptosis.</text>
</comment>
<comment type="subcellular location">
    <subcellularLocation>
        <location evidence="1">Nucleus</location>
    </subcellularLocation>
</comment>
<comment type="similarity">
    <text evidence="4">Belongs to the peptidase S1C family.</text>
</comment>
<feature type="chain" id="PRO_0000320360" description="Pro-apoptotic serine protease NMA111">
    <location>
        <begin position="1"/>
        <end position="983"/>
    </location>
</feature>
<feature type="domain" description="PDZ 1">
    <location>
        <begin position="287"/>
        <end position="365"/>
    </location>
</feature>
<feature type="domain" description="PDZ 2">
    <location>
        <begin position="867"/>
        <end position="948"/>
    </location>
</feature>
<feature type="region of interest" description="Disordered" evidence="3">
    <location>
        <begin position="1"/>
        <end position="40"/>
    </location>
</feature>
<feature type="region of interest" description="Serine protease">
    <location>
        <begin position="59"/>
        <end position="260"/>
    </location>
</feature>
<feature type="compositionally biased region" description="Polar residues" evidence="3">
    <location>
        <begin position="22"/>
        <end position="33"/>
    </location>
</feature>
<feature type="active site" description="Charge relay system" evidence="2">
    <location>
        <position position="108"/>
    </location>
</feature>
<feature type="active site" description="Charge relay system" evidence="2">
    <location>
        <position position="139"/>
    </location>
</feature>
<feature type="active site" description="Charge relay system" evidence="2">
    <location>
        <position position="222"/>
    </location>
</feature>
<organism>
    <name type="scientific">Scheffersomyces stipitis (strain ATCC 58785 / CBS 6054 / NBRC 10063 / NRRL Y-11545)</name>
    <name type="common">Yeast</name>
    <name type="synonym">Pichia stipitis</name>
    <dbReference type="NCBI Taxonomy" id="322104"/>
    <lineage>
        <taxon>Eukaryota</taxon>
        <taxon>Fungi</taxon>
        <taxon>Dikarya</taxon>
        <taxon>Ascomycota</taxon>
        <taxon>Saccharomycotina</taxon>
        <taxon>Pichiomycetes</taxon>
        <taxon>Debaryomycetaceae</taxon>
        <taxon>Scheffersomyces</taxon>
    </lineage>
</organism>
<dbReference type="EC" id="3.4.21.-"/>
<dbReference type="EMBL" id="CP000500">
    <property type="protein sequence ID" value="ABN67426.1"/>
    <property type="molecule type" value="Genomic_DNA"/>
</dbReference>
<dbReference type="RefSeq" id="XP_001385455.1">
    <property type="nucleotide sequence ID" value="XM_001385418.1"/>
</dbReference>
<dbReference type="SMR" id="A3LX99"/>
<dbReference type="FunCoup" id="A3LX99">
    <property type="interactions" value="135"/>
</dbReference>
<dbReference type="STRING" id="322104.A3LX99"/>
<dbReference type="GeneID" id="4839935"/>
<dbReference type="KEGG" id="pic:PICST_47702"/>
<dbReference type="eggNOG" id="KOG1421">
    <property type="taxonomic scope" value="Eukaryota"/>
</dbReference>
<dbReference type="HOGENOM" id="CLU_003212_0_0_1"/>
<dbReference type="InParanoid" id="A3LX99"/>
<dbReference type="OMA" id="FWGHCVF"/>
<dbReference type="OrthoDB" id="4217619at2759"/>
<dbReference type="Proteomes" id="UP000002258">
    <property type="component" value="Chromosome 6"/>
</dbReference>
<dbReference type="GO" id="GO:0005634">
    <property type="term" value="C:nucleus"/>
    <property type="evidence" value="ECO:0007669"/>
    <property type="project" value="UniProtKB-SubCell"/>
</dbReference>
<dbReference type="GO" id="GO:0004252">
    <property type="term" value="F:serine-type endopeptidase activity"/>
    <property type="evidence" value="ECO:0007669"/>
    <property type="project" value="EnsemblFungi"/>
</dbReference>
<dbReference type="GO" id="GO:0006915">
    <property type="term" value="P:apoptotic process"/>
    <property type="evidence" value="ECO:0007669"/>
    <property type="project" value="UniProtKB-KW"/>
</dbReference>
<dbReference type="GO" id="GO:0034605">
    <property type="term" value="P:cellular response to heat"/>
    <property type="evidence" value="ECO:0007669"/>
    <property type="project" value="EnsemblFungi"/>
</dbReference>
<dbReference type="GO" id="GO:0006629">
    <property type="term" value="P:lipid metabolic process"/>
    <property type="evidence" value="ECO:0007669"/>
    <property type="project" value="EnsemblFungi"/>
</dbReference>
<dbReference type="GO" id="GO:0120174">
    <property type="term" value="P:stress-induced homeostatically regulated protein degradation pathway"/>
    <property type="evidence" value="ECO:0007669"/>
    <property type="project" value="EnsemblFungi"/>
</dbReference>
<dbReference type="CDD" id="cd06786">
    <property type="entry name" value="cpPDZ1_ScNma111-like"/>
    <property type="match status" value="1"/>
</dbReference>
<dbReference type="CDD" id="cd10827">
    <property type="entry name" value="cpPDZ3_ScNma111-like"/>
    <property type="match status" value="1"/>
</dbReference>
<dbReference type="CDD" id="cd06719">
    <property type="entry name" value="PDZ2-4_Nma111p-like"/>
    <property type="match status" value="1"/>
</dbReference>
<dbReference type="Gene3D" id="2.30.42.10">
    <property type="match status" value="1"/>
</dbReference>
<dbReference type="Gene3D" id="2.40.10.120">
    <property type="match status" value="2"/>
</dbReference>
<dbReference type="InterPro" id="IPR001478">
    <property type="entry name" value="PDZ"/>
</dbReference>
<dbReference type="InterPro" id="IPR025926">
    <property type="entry name" value="PDZ-like_dom"/>
</dbReference>
<dbReference type="InterPro" id="IPR036034">
    <property type="entry name" value="PDZ_sf"/>
</dbReference>
<dbReference type="InterPro" id="IPR009003">
    <property type="entry name" value="Peptidase_S1_PA"/>
</dbReference>
<dbReference type="InterPro" id="IPR001940">
    <property type="entry name" value="Peptidase_S1C"/>
</dbReference>
<dbReference type="PANTHER" id="PTHR46366">
    <property type="entry name" value="PRO-APOPTOTIC SERINE PROTEASE NMA111"/>
    <property type="match status" value="1"/>
</dbReference>
<dbReference type="PANTHER" id="PTHR46366:SF8">
    <property type="entry name" value="PRO-APOPTOTIC SERINE PROTEASE NMA111"/>
    <property type="match status" value="1"/>
</dbReference>
<dbReference type="Pfam" id="PF12812">
    <property type="entry name" value="PDZ_1"/>
    <property type="match status" value="2"/>
</dbReference>
<dbReference type="Pfam" id="PF13365">
    <property type="entry name" value="Trypsin_2"/>
    <property type="match status" value="1"/>
</dbReference>
<dbReference type="PRINTS" id="PR00834">
    <property type="entry name" value="PROTEASES2C"/>
</dbReference>
<dbReference type="SMART" id="SM00228">
    <property type="entry name" value="PDZ"/>
    <property type="match status" value="2"/>
</dbReference>
<dbReference type="SUPFAM" id="SSF50156">
    <property type="entry name" value="PDZ domain-like"/>
    <property type="match status" value="3"/>
</dbReference>
<dbReference type="SUPFAM" id="SSF50494">
    <property type="entry name" value="Trypsin-like serine proteases"/>
    <property type="match status" value="2"/>
</dbReference>
<protein>
    <recommendedName>
        <fullName>Pro-apoptotic serine protease NMA111</fullName>
        <ecNumber>3.4.21.-</ecNumber>
    </recommendedName>
</protein>
<reference key="1">
    <citation type="journal article" date="2007" name="Nat. Biotechnol.">
        <title>Genome sequence of the lignocellulose-bioconverting and xylose-fermenting yeast Pichia stipitis.</title>
        <authorList>
            <person name="Jeffries T.W."/>
            <person name="Grigoriev I.V."/>
            <person name="Grimwood J."/>
            <person name="Laplaza J.M."/>
            <person name="Aerts A."/>
            <person name="Salamov A."/>
            <person name="Schmutz J."/>
            <person name="Lindquist E."/>
            <person name="Dehal P."/>
            <person name="Shapiro H."/>
            <person name="Jin Y.-S."/>
            <person name="Passoth V."/>
            <person name="Richardson P.M."/>
        </authorList>
    </citation>
    <scope>NUCLEOTIDE SEQUENCE [LARGE SCALE GENOMIC DNA]</scope>
    <source>
        <strain>ATCC 58785 / CBS 6054 / NBRC 10063 / NRRL Y-11545</strain>
    </source>
</reference>
<accession>A3LX99</accession>
<gene>
    <name type="primary">NMA111</name>
    <name type="synonym">PDZ1</name>
    <name type="ORF">PICST_47702</name>
</gene>
<sequence>MSVPTKRRLSFDESTNKRFLNGTHSTENNTSNIEVDEDYGSDGSEQIFDLPATTNNNQWQETITKVVNAVVSIQFTHVSNFDTETSLVSEATGFVVDATRGLILTNRHVVGPGPFCGYVVFDNHEEAVVKPIYRDPVHDFGFLQFDPKEVKYLQLTQLELKPDLAKVGTEIRVVGNDAGEKLSILAGFISRLDRNAPEYGSLTYNDFNTEYIQAAASASGGSSGSPVVNEDGDVVALQAGGSTEASTDFFLPIYRPLRALQCIQKKQPITRGDIQVEWQLKPYDECRRLGLTPEAEARARKLFPNKIGLLVAELVLPQGQADGLIKEGDTLISIDDIDISTFIKVDEILDENVGNELKFVIQRGGEVITQMIKIGDLHSITPDRYVDVGGASFNNLSYQVARCYCIPVKGVFINDASGSFEFASYEKSGWLLETVDDMPTPDLDTLIEVMKMIPDCRRVPITYRHVSDLHTENIQIIYIERHWQSSFRLAVRNDTTGLWDFTDLQEKPLPPLSHEPQNAKFIDIPFSDETRSGCSSLVRSFVQVRLIAPVPMDSYPYRKEICYGVVVDSVNGYVLVSRRFVPHDMCDIFLIFAESIDVPAKVVFLHPNQNYAILKYDPSLVLADVKTPKFGDKPLKRGEKSYFIGYNYNLRLVTDDVKISGVSSLNIPPASLSPRYRGTNLECILLDSKISVECDSGVLADDDGTVRAFWITYLGEATCDQGSDRMYRMGLDVTDVLSVIEKLKVNEIPKQLRLLEAEFTSVTILQGRTRGVSQEWINKFEEVCEDEIKFLAVERVSAPTLHQEKNPLKAGDIILSVNDIIVKNMRDLKPMFTEQELKFRIIRQKKETEIVVPTIDTTTINTSHVVFWSGAIIQAPHYAVRQLMERVPSEVYVTRKSAGGPAHQYGIATNSFITHVNDVETKDLVSLMKVVKDIPDNTYIKLRLMSFDNVPIAISLKTNYHYFPTSELKKKEGSDEWIEIEHK</sequence>
<evidence type="ECO:0000250" key="1"/>
<evidence type="ECO:0000255" key="2"/>
<evidence type="ECO:0000256" key="3">
    <source>
        <dbReference type="SAM" id="MobiDB-lite"/>
    </source>
</evidence>
<evidence type="ECO:0000305" key="4"/>